<organism>
    <name type="scientific">Homo sapiens</name>
    <name type="common">Human</name>
    <dbReference type="NCBI Taxonomy" id="9606"/>
    <lineage>
        <taxon>Eukaryota</taxon>
        <taxon>Metazoa</taxon>
        <taxon>Chordata</taxon>
        <taxon>Craniata</taxon>
        <taxon>Vertebrata</taxon>
        <taxon>Euteleostomi</taxon>
        <taxon>Mammalia</taxon>
        <taxon>Eutheria</taxon>
        <taxon>Euarchontoglires</taxon>
        <taxon>Primates</taxon>
        <taxon>Haplorrhini</taxon>
        <taxon>Catarrhini</taxon>
        <taxon>Hominidae</taxon>
        <taxon>Homo</taxon>
    </lineage>
</organism>
<protein>
    <recommendedName>
        <fullName>Alpha-soluble NSF attachment protein</fullName>
        <shortName>SNAP-alpha</shortName>
    </recommendedName>
    <alternativeName>
        <fullName>N-ethylmaleimide-sensitive factor attachment protein alpha</fullName>
    </alternativeName>
</protein>
<sequence>MDNSGKEAEAMALLAEAERKVKNSQSFFSGLFGGSSKIEEACEIYARAANMFKMAKNWSAAGNAFCQAAQLHLQLQSKHDAATCFVDAGNAFKKADPQEAINCLMRAIEIYTDMGRFTIAAKHHISIAEIYETELVDIEKAIAHYEQSADYYKGEESNSSANKCLLKVAGYAALLEQYQKAIDIYEQVGTNAMDSPLLKYSAKDYFFKAALCHFCIDMLNAKLAVQKYEELFPAFSDSRECKLMKKLLEAHEEQNVDSYTESVKEYDSISRLDQWLTTMLLRIKKTIQGDEEDLR</sequence>
<name>SNAA_HUMAN</name>
<evidence type="ECO:0000250" key="1">
    <source>
        <dbReference type="UniProtKB" id="P54921"/>
    </source>
</evidence>
<evidence type="ECO:0000250" key="2">
    <source>
        <dbReference type="UniProtKB" id="Q9DB05"/>
    </source>
</evidence>
<evidence type="ECO:0000269" key="3">
    <source>
    </source>
</evidence>
<evidence type="ECO:0000269" key="4">
    <source>
    </source>
</evidence>
<evidence type="ECO:0000305" key="5"/>
<evidence type="ECO:0000305" key="6">
    <source>
    </source>
</evidence>
<evidence type="ECO:0007744" key="7">
    <source>
    </source>
</evidence>
<evidence type="ECO:0007744" key="8">
    <source>
    </source>
</evidence>
<evidence type="ECO:0007744" key="9">
    <source>
    </source>
</evidence>
<proteinExistence type="evidence at protein level"/>
<keyword id="KW-0007">Acetylation</keyword>
<keyword id="KW-1003">Cell membrane</keyword>
<keyword id="KW-0931">ER-Golgi transport</keyword>
<keyword id="KW-0472">Membrane</keyword>
<keyword id="KW-0597">Phosphoprotein</keyword>
<keyword id="KW-0653">Protein transport</keyword>
<keyword id="KW-1267">Proteomics identification</keyword>
<keyword id="KW-1185">Reference proteome</keyword>
<keyword id="KW-0813">Transport</keyword>
<gene>
    <name type="primary">NAPA</name>
    <name type="synonym">SNAPA</name>
</gene>
<reference key="1">
    <citation type="journal article" date="1997" name="Blood">
        <title>Regulated secretion in platelets: identification of elements of the platelet exocytosis machinery.</title>
        <authorList>
            <person name="Lemons P.P."/>
            <person name="Chen D."/>
            <person name="Bernstein A.M."/>
            <person name="Bennett M.K."/>
            <person name="Whiteheart S.W."/>
        </authorList>
    </citation>
    <scope>NUCLEOTIDE SEQUENCE [MRNA]</scope>
    <source>
        <tissue>Platelet</tissue>
    </source>
</reference>
<reference key="2">
    <citation type="submission" date="1998-11" db="EMBL/GenBank/DDBJ databases">
        <authorList>
            <person name="Chen D."/>
            <person name="Shao H.P."/>
            <person name="Whiteheart S.W."/>
        </authorList>
    </citation>
    <scope>SEQUENCE REVISION TO 91; 133 AND 289</scope>
</reference>
<reference key="3">
    <citation type="submission" date="2004-10" db="EMBL/GenBank/DDBJ databases">
        <title>Cloning of human full-length CDSs in BD Creator(TM) system donor vector.</title>
        <authorList>
            <person name="Kalnine N."/>
            <person name="Chen X."/>
            <person name="Rolfs A."/>
            <person name="Halleck A."/>
            <person name="Hines L."/>
            <person name="Eisenstein S."/>
            <person name="Koundinya M."/>
            <person name="Raphael J."/>
            <person name="Moreira D."/>
            <person name="Kelley T."/>
            <person name="LaBaer J."/>
            <person name="Lin Y."/>
            <person name="Phelan M."/>
            <person name="Farmer A."/>
        </authorList>
    </citation>
    <scope>NUCLEOTIDE SEQUENCE [LARGE SCALE MRNA]</scope>
</reference>
<reference key="4">
    <citation type="journal article" date="2004" name="Nat. Genet.">
        <title>Complete sequencing and characterization of 21,243 full-length human cDNAs.</title>
        <authorList>
            <person name="Ota T."/>
            <person name="Suzuki Y."/>
            <person name="Nishikawa T."/>
            <person name="Otsuki T."/>
            <person name="Sugiyama T."/>
            <person name="Irie R."/>
            <person name="Wakamatsu A."/>
            <person name="Hayashi K."/>
            <person name="Sato H."/>
            <person name="Nagai K."/>
            <person name="Kimura K."/>
            <person name="Makita H."/>
            <person name="Sekine M."/>
            <person name="Obayashi M."/>
            <person name="Nishi T."/>
            <person name="Shibahara T."/>
            <person name="Tanaka T."/>
            <person name="Ishii S."/>
            <person name="Yamamoto J."/>
            <person name="Saito K."/>
            <person name="Kawai Y."/>
            <person name="Isono Y."/>
            <person name="Nakamura Y."/>
            <person name="Nagahari K."/>
            <person name="Murakami K."/>
            <person name="Yasuda T."/>
            <person name="Iwayanagi T."/>
            <person name="Wagatsuma M."/>
            <person name="Shiratori A."/>
            <person name="Sudo H."/>
            <person name="Hosoiri T."/>
            <person name="Kaku Y."/>
            <person name="Kodaira H."/>
            <person name="Kondo H."/>
            <person name="Sugawara M."/>
            <person name="Takahashi M."/>
            <person name="Kanda K."/>
            <person name="Yokoi T."/>
            <person name="Furuya T."/>
            <person name="Kikkawa E."/>
            <person name="Omura Y."/>
            <person name="Abe K."/>
            <person name="Kamihara K."/>
            <person name="Katsuta N."/>
            <person name="Sato K."/>
            <person name="Tanikawa M."/>
            <person name="Yamazaki M."/>
            <person name="Ninomiya K."/>
            <person name="Ishibashi T."/>
            <person name="Yamashita H."/>
            <person name="Murakawa K."/>
            <person name="Fujimori K."/>
            <person name="Tanai H."/>
            <person name="Kimata M."/>
            <person name="Watanabe M."/>
            <person name="Hiraoka S."/>
            <person name="Chiba Y."/>
            <person name="Ishida S."/>
            <person name="Ono Y."/>
            <person name="Takiguchi S."/>
            <person name="Watanabe S."/>
            <person name="Yosida M."/>
            <person name="Hotuta T."/>
            <person name="Kusano J."/>
            <person name="Kanehori K."/>
            <person name="Takahashi-Fujii A."/>
            <person name="Hara H."/>
            <person name="Tanase T.-O."/>
            <person name="Nomura Y."/>
            <person name="Togiya S."/>
            <person name="Komai F."/>
            <person name="Hara R."/>
            <person name="Takeuchi K."/>
            <person name="Arita M."/>
            <person name="Imose N."/>
            <person name="Musashino K."/>
            <person name="Yuuki H."/>
            <person name="Oshima A."/>
            <person name="Sasaki N."/>
            <person name="Aotsuka S."/>
            <person name="Yoshikawa Y."/>
            <person name="Matsunawa H."/>
            <person name="Ichihara T."/>
            <person name="Shiohata N."/>
            <person name="Sano S."/>
            <person name="Moriya S."/>
            <person name="Momiyama H."/>
            <person name="Satoh N."/>
            <person name="Takami S."/>
            <person name="Terashima Y."/>
            <person name="Suzuki O."/>
            <person name="Nakagawa S."/>
            <person name="Senoh A."/>
            <person name="Mizoguchi H."/>
            <person name="Goto Y."/>
            <person name="Shimizu F."/>
            <person name="Wakebe H."/>
            <person name="Hishigaki H."/>
            <person name="Watanabe T."/>
            <person name="Sugiyama A."/>
            <person name="Takemoto M."/>
            <person name="Kawakami B."/>
            <person name="Yamazaki M."/>
            <person name="Watanabe K."/>
            <person name="Kumagai A."/>
            <person name="Itakura S."/>
            <person name="Fukuzumi Y."/>
            <person name="Fujimori Y."/>
            <person name="Komiyama M."/>
            <person name="Tashiro H."/>
            <person name="Tanigami A."/>
            <person name="Fujiwara T."/>
            <person name="Ono T."/>
            <person name="Yamada K."/>
            <person name="Fujii Y."/>
            <person name="Ozaki K."/>
            <person name="Hirao M."/>
            <person name="Ohmori Y."/>
            <person name="Kawabata A."/>
            <person name="Hikiji T."/>
            <person name="Kobatake N."/>
            <person name="Inagaki H."/>
            <person name="Ikema Y."/>
            <person name="Okamoto S."/>
            <person name="Okitani R."/>
            <person name="Kawakami T."/>
            <person name="Noguchi S."/>
            <person name="Itoh T."/>
            <person name="Shigeta K."/>
            <person name="Senba T."/>
            <person name="Matsumura K."/>
            <person name="Nakajima Y."/>
            <person name="Mizuno T."/>
            <person name="Morinaga M."/>
            <person name="Sasaki M."/>
            <person name="Togashi T."/>
            <person name="Oyama M."/>
            <person name="Hata H."/>
            <person name="Watanabe M."/>
            <person name="Komatsu T."/>
            <person name="Mizushima-Sugano J."/>
            <person name="Satoh T."/>
            <person name="Shirai Y."/>
            <person name="Takahashi Y."/>
            <person name="Nakagawa K."/>
            <person name="Okumura K."/>
            <person name="Nagase T."/>
            <person name="Nomura N."/>
            <person name="Kikuchi H."/>
            <person name="Masuho Y."/>
            <person name="Yamashita R."/>
            <person name="Nakai K."/>
            <person name="Yada T."/>
            <person name="Nakamura Y."/>
            <person name="Ohara O."/>
            <person name="Isogai T."/>
            <person name="Sugano S."/>
        </authorList>
    </citation>
    <scope>NUCLEOTIDE SEQUENCE [LARGE SCALE MRNA]</scope>
    <source>
        <tissue>Testis</tissue>
    </source>
</reference>
<reference key="5">
    <citation type="submission" date="2005-07" db="EMBL/GenBank/DDBJ databases">
        <authorList>
            <person name="Mural R.J."/>
            <person name="Istrail S."/>
            <person name="Sutton G.G."/>
            <person name="Florea L."/>
            <person name="Halpern A.L."/>
            <person name="Mobarry C.M."/>
            <person name="Lippert R."/>
            <person name="Walenz B."/>
            <person name="Shatkay H."/>
            <person name="Dew I."/>
            <person name="Miller J.R."/>
            <person name="Flanigan M.J."/>
            <person name="Edwards N.J."/>
            <person name="Bolanos R."/>
            <person name="Fasulo D."/>
            <person name="Halldorsson B.V."/>
            <person name="Hannenhalli S."/>
            <person name="Turner R."/>
            <person name="Yooseph S."/>
            <person name="Lu F."/>
            <person name="Nusskern D.R."/>
            <person name="Shue B.C."/>
            <person name="Zheng X.H."/>
            <person name="Zhong F."/>
            <person name="Delcher A.L."/>
            <person name="Huson D.H."/>
            <person name="Kravitz S.A."/>
            <person name="Mouchard L."/>
            <person name="Reinert K."/>
            <person name="Remington K.A."/>
            <person name="Clark A.G."/>
            <person name="Waterman M.S."/>
            <person name="Eichler E.E."/>
            <person name="Adams M.D."/>
            <person name="Hunkapiller M.W."/>
            <person name="Myers E.W."/>
            <person name="Venter J.C."/>
        </authorList>
    </citation>
    <scope>NUCLEOTIDE SEQUENCE [LARGE SCALE GENOMIC DNA]</scope>
</reference>
<reference key="6">
    <citation type="journal article" date="2004" name="Genome Res.">
        <title>The status, quality, and expansion of the NIH full-length cDNA project: the Mammalian Gene Collection (MGC).</title>
        <authorList>
            <consortium name="The MGC Project Team"/>
        </authorList>
    </citation>
    <scope>NUCLEOTIDE SEQUENCE [LARGE SCALE MRNA]</scope>
    <source>
        <tissue>Brain</tissue>
        <tissue>Lung</tissue>
        <tissue>Placenta</tissue>
    </source>
</reference>
<reference key="7">
    <citation type="journal article" date="2004" name="EMBO J.">
        <title>Implication of ZW10 in membrane trafficking between the endoplasmic reticulum and Golgi.</title>
        <authorList>
            <person name="Hirose H."/>
            <person name="Arasaki K."/>
            <person name="Dohmae N."/>
            <person name="Takio K."/>
            <person name="Hatsuzawa K."/>
            <person name="Nagahama M."/>
            <person name="Tani K."/>
            <person name="Yamamoto A."/>
            <person name="Tohyama M."/>
            <person name="Tagaya M."/>
        </authorList>
    </citation>
    <scope>IDENTIFICATION BY MASS SPECTROMETRY</scope>
    <scope>IDENTIFICATION IN A COMPLEX WITH RINT1; USE1L; NAPA AND ZW10</scope>
</reference>
<reference key="8">
    <citation type="journal article" date="2005" name="J. Biol. Chem.">
        <title>G alpha12 interaction with alphaSNAP induces VE-cadherin localization at endothelial junctions and regulates barrier function.</title>
        <authorList>
            <person name="Andreeva A.V."/>
            <person name="Kutuzov M.A."/>
            <person name="Vaiskunaite R."/>
            <person name="Profirovic J."/>
            <person name="Meigs T.E."/>
            <person name="Predescu S."/>
            <person name="Malik A.B."/>
            <person name="Voyno-Yasenetskaya T."/>
        </authorList>
    </citation>
    <scope>FUNCTION</scope>
    <scope>INTERACTION WITH GNA12</scope>
    <scope>SUBCELLULAR LOCATION</scope>
    <scope>MUTAGENESIS OF LYS-122 AND LYS-140</scope>
</reference>
<reference key="9">
    <citation type="journal article" date="2011" name="BMC Syst. Biol.">
        <title>Initial characterization of the human central proteome.</title>
        <authorList>
            <person name="Burkard T.R."/>
            <person name="Planyavsky M."/>
            <person name="Kaupe I."/>
            <person name="Breitwieser F.P."/>
            <person name="Buerckstuemmer T."/>
            <person name="Bennett K.L."/>
            <person name="Superti-Furga G."/>
            <person name="Colinge J."/>
        </authorList>
    </citation>
    <scope>IDENTIFICATION BY MASS SPECTROMETRY [LARGE SCALE ANALYSIS]</scope>
</reference>
<reference key="10">
    <citation type="journal article" date="2012" name="Proc. Natl. Acad. Sci. U.S.A.">
        <title>N-terminal acetylome analyses and functional insights of the N-terminal acetyltransferase NatB.</title>
        <authorList>
            <person name="Van Damme P."/>
            <person name="Lasa M."/>
            <person name="Polevoda B."/>
            <person name="Gazquez C."/>
            <person name="Elosegui-Artola A."/>
            <person name="Kim D.S."/>
            <person name="De Juan-Pardo E."/>
            <person name="Demeyer K."/>
            <person name="Hole K."/>
            <person name="Larrea E."/>
            <person name="Timmerman E."/>
            <person name="Prieto J."/>
            <person name="Arnesen T."/>
            <person name="Sherman F."/>
            <person name="Gevaert K."/>
            <person name="Aldabe R."/>
        </authorList>
    </citation>
    <scope>ACETYLATION [LARGE SCALE ANALYSIS] AT MET-1</scope>
    <scope>IDENTIFICATION BY MASS SPECTROMETRY [LARGE SCALE ANALYSIS]</scope>
</reference>
<reference key="11">
    <citation type="journal article" date="2013" name="J. Proteome Res.">
        <title>Toward a comprehensive characterization of a human cancer cell phosphoproteome.</title>
        <authorList>
            <person name="Zhou H."/>
            <person name="Di Palma S."/>
            <person name="Preisinger C."/>
            <person name="Peng M."/>
            <person name="Polat A.N."/>
            <person name="Heck A.J."/>
            <person name="Mohammed S."/>
        </authorList>
    </citation>
    <scope>PHOSPHORYLATION [LARGE SCALE ANALYSIS] AT SER-29</scope>
    <scope>IDENTIFICATION BY MASS SPECTROMETRY [LARGE SCALE ANALYSIS]</scope>
    <source>
        <tissue>Erythroleukemia</tissue>
    </source>
</reference>
<reference key="12">
    <citation type="journal article" date="2014" name="J. Proteomics">
        <title>An enzyme assisted RP-RPLC approach for in-depth analysis of human liver phosphoproteome.</title>
        <authorList>
            <person name="Bian Y."/>
            <person name="Song C."/>
            <person name="Cheng K."/>
            <person name="Dong M."/>
            <person name="Wang F."/>
            <person name="Huang J."/>
            <person name="Sun D."/>
            <person name="Wang L."/>
            <person name="Ye M."/>
            <person name="Zou H."/>
        </authorList>
    </citation>
    <scope>PHOSPHORYLATION [LARGE SCALE ANALYSIS] AT SER-195</scope>
    <scope>IDENTIFICATION BY MASS SPECTROMETRY [LARGE SCALE ANALYSIS]</scope>
    <source>
        <tissue>Liver</tissue>
    </source>
</reference>
<reference key="13">
    <citation type="journal article" date="2015" name="Proteomics">
        <title>N-terminome analysis of the human mitochondrial proteome.</title>
        <authorList>
            <person name="Vaca Jacome A.S."/>
            <person name="Rabilloud T."/>
            <person name="Schaeffer-Reiss C."/>
            <person name="Rompais M."/>
            <person name="Ayoub D."/>
            <person name="Lane L."/>
            <person name="Bairoch A."/>
            <person name="Van Dorsselaer A."/>
            <person name="Carapito C."/>
        </authorList>
    </citation>
    <scope>IDENTIFICATION BY MASS SPECTROMETRY [LARGE SCALE ANALYSIS]</scope>
</reference>
<comment type="function">
    <text evidence="4 5">Required for vesicular transport between the endoplasmic reticulum and the Golgi apparatus (Probable). Together with GNA12 promotes CDH5 localization to plasma membrane (PubMed:15980433).</text>
</comment>
<comment type="subunit">
    <text evidence="1 2 3 4">Interacts with PRKCABP, and disrupts the interaction between GRIA2 and PRKCABP, leading to the internalization of GRIA2 (By similarity). Found in a complex with VAMP8 (By similarity). Component of a SNARE-like complex that contains at least ZW10, USE1L, RINT1, STX18 and NAPA/SNAP-alpha (PubMed:15029241). Interacts with VTI1A (By similarity). Interacts with STX12 (By similarity). Interacts with GNA12 (via N-terminus); the interaction promotes CDH5 localization to plasma membrane (PubMed:15980433).</text>
</comment>
<comment type="interaction">
    <interactant intactId="EBI-749652">
        <id>P54920</id>
    </interactant>
    <interactant intactId="EBI-466029">
        <id>P42858</id>
        <label>HTT</label>
    </interactant>
    <organismsDiffer>false</organismsDiffer>
    <experiments>3</experiments>
</comment>
<comment type="interaction">
    <interactant intactId="EBI-749652">
        <id>P54920</id>
    </interactant>
    <interactant intactId="EBI-712251">
        <id>P46459</id>
        <label>NSF</label>
    </interactant>
    <organismsDiffer>false</organismsDiffer>
    <experiments>4</experiments>
</comment>
<comment type="interaction">
    <interactant intactId="EBI-749652">
        <id>P54920</id>
    </interactant>
    <interactant intactId="EBI-745000">
        <id>O00161</id>
        <label>SNAP23</label>
    </interactant>
    <organismsDiffer>false</organismsDiffer>
    <experiments>5</experiments>
</comment>
<comment type="interaction">
    <interactant intactId="EBI-749652">
        <id>P54920</id>
    </interactant>
    <interactant intactId="EBI-744942">
        <id>Q12846</id>
        <label>STX4</label>
    </interactant>
    <organismsDiffer>false</organismsDiffer>
    <experiments>5</experiments>
</comment>
<comment type="interaction">
    <interactant intactId="EBI-749652">
        <id>P54920</id>
    </interactant>
    <interactant intactId="EBI-714206">
        <id>Q13190</id>
        <label>STX5</label>
    </interactant>
    <organismsDiffer>false</organismsDiffer>
    <experiments>5</experiments>
</comment>
<comment type="subcellular location">
    <subcellularLocation>
        <location evidence="4">Cell membrane</location>
        <topology evidence="6">Peripheral membrane protein</topology>
    </subcellularLocation>
</comment>
<comment type="similarity">
    <text evidence="5">Belongs to the SNAP family.</text>
</comment>
<feature type="chain" id="PRO_0000219056" description="Alpha-soluble NSF attachment protein">
    <location>
        <begin position="1"/>
        <end position="295"/>
    </location>
</feature>
<feature type="modified residue" description="N-acetylmethionine" evidence="7">
    <location>
        <position position="1"/>
    </location>
</feature>
<feature type="modified residue" description="Phosphoserine" evidence="2">
    <location>
        <position position="26"/>
    </location>
</feature>
<feature type="modified residue" description="Phosphoserine" evidence="8">
    <location>
        <position position="29"/>
    </location>
</feature>
<feature type="modified residue" description="Phosphoserine" evidence="9">
    <location>
        <position position="195"/>
    </location>
</feature>
<feature type="mutagenesis site" description="Does not affect interaction with GNA12." evidence="4">
    <original>K</original>
    <variation>A</variation>
    <location>
        <position position="122"/>
    </location>
</feature>
<feature type="mutagenesis site" description="Increases interaction with GNA12." evidence="4">
    <original>K</original>
    <variation>A</variation>
    <location>
        <position position="140"/>
    </location>
</feature>
<feature type="sequence conflict" description="In Ref. 1; AAC80170." evidence="5" ref="1">
    <original>S</original>
    <variation>T</variation>
    <location>
        <position position="195"/>
    </location>
</feature>
<dbReference type="EMBL" id="U39412">
    <property type="protein sequence ID" value="AAC80170.1"/>
    <property type="molecule type" value="mRNA"/>
</dbReference>
<dbReference type="EMBL" id="BT019568">
    <property type="protein sequence ID" value="AAV38375.1"/>
    <property type="molecule type" value="mRNA"/>
</dbReference>
<dbReference type="EMBL" id="AK292244">
    <property type="protein sequence ID" value="BAF84933.1"/>
    <property type="molecule type" value="mRNA"/>
</dbReference>
<dbReference type="EMBL" id="CH471126">
    <property type="protein sequence ID" value="EAW57491.1"/>
    <property type="molecule type" value="Genomic_DNA"/>
</dbReference>
<dbReference type="EMBL" id="BC001165">
    <property type="protein sequence ID" value="AAH01165.1"/>
    <property type="molecule type" value="mRNA"/>
</dbReference>
<dbReference type="EMBL" id="BC007432">
    <property type="protein sequence ID" value="AAH07432.1"/>
    <property type="molecule type" value="mRNA"/>
</dbReference>
<dbReference type="EMBL" id="BC028234">
    <property type="protein sequence ID" value="AAH28234.1"/>
    <property type="molecule type" value="mRNA"/>
</dbReference>
<dbReference type="EMBL" id="BC091511">
    <property type="protein sequence ID" value="AAH91511.1"/>
    <property type="molecule type" value="mRNA"/>
</dbReference>
<dbReference type="CCDS" id="CCDS12702.1"/>
<dbReference type="PIR" id="G02238">
    <property type="entry name" value="G02238"/>
</dbReference>
<dbReference type="RefSeq" id="NP_003818.2">
    <property type="nucleotide sequence ID" value="NM_003827.3"/>
</dbReference>
<dbReference type="SMR" id="P54920"/>
<dbReference type="BioGRID" id="114305">
    <property type="interactions" value="232"/>
</dbReference>
<dbReference type="FunCoup" id="P54920">
    <property type="interactions" value="2469"/>
</dbReference>
<dbReference type="IntAct" id="P54920">
    <property type="interactions" value="110"/>
</dbReference>
<dbReference type="MINT" id="P54920"/>
<dbReference type="STRING" id="9606.ENSP00000263354"/>
<dbReference type="GlyGen" id="P54920">
    <property type="glycosylation" value="1 site, 1 O-linked glycan (1 site)"/>
</dbReference>
<dbReference type="iPTMnet" id="P54920"/>
<dbReference type="MetOSite" id="P54920"/>
<dbReference type="PhosphoSitePlus" id="P54920"/>
<dbReference type="SwissPalm" id="P54920"/>
<dbReference type="BioMuta" id="NAPA"/>
<dbReference type="DMDM" id="116242794"/>
<dbReference type="OGP" id="P54920"/>
<dbReference type="CPTAC" id="CPTAC-547"/>
<dbReference type="CPTAC" id="CPTAC-548"/>
<dbReference type="jPOST" id="P54920"/>
<dbReference type="MassIVE" id="P54920"/>
<dbReference type="PaxDb" id="9606-ENSP00000263354"/>
<dbReference type="PeptideAtlas" id="P54920"/>
<dbReference type="PRIDE" id="P54920"/>
<dbReference type="ProteomicsDB" id="56747"/>
<dbReference type="Pumba" id="P54920"/>
<dbReference type="TopDownProteomics" id="P54920"/>
<dbReference type="Antibodypedia" id="4110">
    <property type="antibodies" value="266 antibodies from 33 providers"/>
</dbReference>
<dbReference type="DNASU" id="8775"/>
<dbReference type="Ensembl" id="ENST00000263354.8">
    <property type="protein sequence ID" value="ENSP00000263354.2"/>
    <property type="gene ID" value="ENSG00000105402.8"/>
</dbReference>
<dbReference type="GeneID" id="8775"/>
<dbReference type="KEGG" id="hsa:8775"/>
<dbReference type="MANE-Select" id="ENST00000263354.8">
    <property type="protein sequence ID" value="ENSP00000263354.2"/>
    <property type="RefSeq nucleotide sequence ID" value="NM_003827.4"/>
    <property type="RefSeq protein sequence ID" value="NP_003818.2"/>
</dbReference>
<dbReference type="UCSC" id="uc002pha.3">
    <property type="organism name" value="human"/>
</dbReference>
<dbReference type="AGR" id="HGNC:7641"/>
<dbReference type="CTD" id="8775"/>
<dbReference type="DisGeNET" id="8775"/>
<dbReference type="GeneCards" id="NAPA"/>
<dbReference type="HGNC" id="HGNC:7641">
    <property type="gene designation" value="NAPA"/>
</dbReference>
<dbReference type="HPA" id="ENSG00000105402">
    <property type="expression patterns" value="Low tissue specificity"/>
</dbReference>
<dbReference type="MIM" id="603215">
    <property type="type" value="gene"/>
</dbReference>
<dbReference type="neXtProt" id="NX_P54920"/>
<dbReference type="OpenTargets" id="ENSG00000105402"/>
<dbReference type="PharmGKB" id="PA31443"/>
<dbReference type="VEuPathDB" id="HostDB:ENSG00000105402"/>
<dbReference type="eggNOG" id="KOG1586">
    <property type="taxonomic scope" value="Eukaryota"/>
</dbReference>
<dbReference type="GeneTree" id="ENSGT00390000005826"/>
<dbReference type="HOGENOM" id="CLU_046329_0_1_1"/>
<dbReference type="InParanoid" id="P54920"/>
<dbReference type="OMA" id="WSVKEYL"/>
<dbReference type="OrthoDB" id="9984275at2759"/>
<dbReference type="PAN-GO" id="P54920">
    <property type="GO annotations" value="7 GO annotations based on evolutionary models"/>
</dbReference>
<dbReference type="PhylomeDB" id="P54920"/>
<dbReference type="TreeFam" id="TF316547"/>
<dbReference type="PathwayCommons" id="P54920"/>
<dbReference type="Reactome" id="R-HSA-204005">
    <property type="pathway name" value="COPII-mediated vesicle transport"/>
</dbReference>
<dbReference type="Reactome" id="R-HSA-432722">
    <property type="pathway name" value="Golgi Associated Vesicle Biogenesis"/>
</dbReference>
<dbReference type="Reactome" id="R-HSA-6807878">
    <property type="pathway name" value="COPI-mediated anterograde transport"/>
</dbReference>
<dbReference type="Reactome" id="R-HSA-6811434">
    <property type="pathway name" value="COPI-dependent Golgi-to-ER retrograde traffic"/>
</dbReference>
<dbReference type="Reactome" id="R-HSA-6811438">
    <property type="pathway name" value="Intra-Golgi traffic"/>
</dbReference>
<dbReference type="Reactome" id="R-HSA-6811440">
    <property type="pathway name" value="Retrograde transport at the Trans-Golgi-Network"/>
</dbReference>
<dbReference type="SignaLink" id="P54920"/>
<dbReference type="BioGRID-ORCS" id="8775">
    <property type="hits" value="801 hits in 1136 CRISPR screens"/>
</dbReference>
<dbReference type="CD-CODE" id="FB4E32DD">
    <property type="entry name" value="Presynaptic clusters and postsynaptic densities"/>
</dbReference>
<dbReference type="ChiTaRS" id="NAPA">
    <property type="organism name" value="human"/>
</dbReference>
<dbReference type="GeneWiki" id="NAPA_(gene)"/>
<dbReference type="GenomeRNAi" id="8775"/>
<dbReference type="Pharos" id="P54920">
    <property type="development level" value="Tbio"/>
</dbReference>
<dbReference type="PRO" id="PR:P54920"/>
<dbReference type="Proteomes" id="UP000005640">
    <property type="component" value="Chromosome 19"/>
</dbReference>
<dbReference type="RNAct" id="P54920">
    <property type="molecule type" value="protein"/>
</dbReference>
<dbReference type="Bgee" id="ENSG00000105402">
    <property type="expression patterns" value="Expressed in right hemisphere of cerebellum and 99 other cell types or tissues"/>
</dbReference>
<dbReference type="ExpressionAtlas" id="P54920">
    <property type="expression patterns" value="baseline and differential"/>
</dbReference>
<dbReference type="GO" id="GO:0005829">
    <property type="term" value="C:cytosol"/>
    <property type="evidence" value="ECO:0000304"/>
    <property type="project" value="Reactome"/>
</dbReference>
<dbReference type="GO" id="GO:0070062">
    <property type="term" value="C:extracellular exosome"/>
    <property type="evidence" value="ECO:0007005"/>
    <property type="project" value="UniProtKB"/>
</dbReference>
<dbReference type="GO" id="GO:0098978">
    <property type="term" value="C:glutamatergic synapse"/>
    <property type="evidence" value="ECO:0007669"/>
    <property type="project" value="Ensembl"/>
</dbReference>
<dbReference type="GO" id="GO:0016020">
    <property type="term" value="C:membrane"/>
    <property type="evidence" value="ECO:0007005"/>
    <property type="project" value="UniProtKB"/>
</dbReference>
<dbReference type="GO" id="GO:0031594">
    <property type="term" value="C:neuromuscular junction"/>
    <property type="evidence" value="ECO:0007669"/>
    <property type="project" value="Ensembl"/>
</dbReference>
<dbReference type="GO" id="GO:0098794">
    <property type="term" value="C:postsynapse"/>
    <property type="evidence" value="ECO:0007669"/>
    <property type="project" value="Ensembl"/>
</dbReference>
<dbReference type="GO" id="GO:0048787">
    <property type="term" value="C:presynaptic active zone membrane"/>
    <property type="evidence" value="ECO:0007669"/>
    <property type="project" value="Ensembl"/>
</dbReference>
<dbReference type="GO" id="GO:0070044">
    <property type="term" value="C:synaptobrevin 2-SNAP-25-syntaxin-1a complex"/>
    <property type="evidence" value="ECO:0000318"/>
    <property type="project" value="GO_Central"/>
</dbReference>
<dbReference type="GO" id="GO:0044877">
    <property type="term" value="F:protein-containing complex binding"/>
    <property type="evidence" value="ECO:0000250"/>
    <property type="project" value="ParkinsonsUK-UCL"/>
</dbReference>
<dbReference type="GO" id="GO:0000149">
    <property type="term" value="F:SNARE binding"/>
    <property type="evidence" value="ECO:0000250"/>
    <property type="project" value="ParkinsonsUK-UCL"/>
</dbReference>
<dbReference type="GO" id="GO:0005483">
    <property type="term" value="F:soluble NSF attachment protein activity"/>
    <property type="evidence" value="ECO:0000318"/>
    <property type="project" value="GO_Central"/>
</dbReference>
<dbReference type="GO" id="GO:0019905">
    <property type="term" value="F:syntaxin binding"/>
    <property type="evidence" value="ECO:0000318"/>
    <property type="project" value="GO_Central"/>
</dbReference>
<dbReference type="GO" id="GO:0045176">
    <property type="term" value="P:apical protein localization"/>
    <property type="evidence" value="ECO:0007669"/>
    <property type="project" value="Ensembl"/>
</dbReference>
<dbReference type="GO" id="GO:0007420">
    <property type="term" value="P:brain development"/>
    <property type="evidence" value="ECO:0007669"/>
    <property type="project" value="Ensembl"/>
</dbReference>
<dbReference type="GO" id="GO:0006891">
    <property type="term" value="P:intra-Golgi vesicle-mediated transport"/>
    <property type="evidence" value="ECO:0000304"/>
    <property type="project" value="ProtInc"/>
</dbReference>
<dbReference type="GO" id="GO:0006886">
    <property type="term" value="P:intracellular protein transport"/>
    <property type="evidence" value="ECO:0000318"/>
    <property type="project" value="GO_Central"/>
</dbReference>
<dbReference type="GO" id="GO:0061025">
    <property type="term" value="P:membrane fusion"/>
    <property type="evidence" value="ECO:0000304"/>
    <property type="project" value="ProtInc"/>
</dbReference>
<dbReference type="GO" id="GO:0030182">
    <property type="term" value="P:neuron differentiation"/>
    <property type="evidence" value="ECO:0007669"/>
    <property type="project" value="Ensembl"/>
</dbReference>
<dbReference type="GO" id="GO:0010807">
    <property type="term" value="P:regulation of synaptic vesicle priming"/>
    <property type="evidence" value="ECO:0000318"/>
    <property type="project" value="GO_Central"/>
</dbReference>
<dbReference type="GO" id="GO:0035494">
    <property type="term" value="P:SNARE complex disassembly"/>
    <property type="evidence" value="ECO:0000318"/>
    <property type="project" value="GO_Central"/>
</dbReference>
<dbReference type="GO" id="GO:0035249">
    <property type="term" value="P:synaptic transmission, glutamatergic"/>
    <property type="evidence" value="ECO:0000318"/>
    <property type="project" value="GO_Central"/>
</dbReference>
<dbReference type="GO" id="GO:0016082">
    <property type="term" value="P:synaptic vesicle priming"/>
    <property type="evidence" value="ECO:0007669"/>
    <property type="project" value="Ensembl"/>
</dbReference>
<dbReference type="CDD" id="cd15832">
    <property type="entry name" value="SNAP"/>
    <property type="match status" value="1"/>
</dbReference>
<dbReference type="FunFam" id="1.25.40.10:FF:000028">
    <property type="entry name" value="beta-soluble NSF attachment protein-like isoform X1"/>
    <property type="match status" value="1"/>
</dbReference>
<dbReference type="Gene3D" id="1.25.40.10">
    <property type="entry name" value="Tetratricopeptide repeat domain"/>
    <property type="match status" value="1"/>
</dbReference>
<dbReference type="InterPro" id="IPR000744">
    <property type="entry name" value="NSF_attach"/>
</dbReference>
<dbReference type="InterPro" id="IPR011990">
    <property type="entry name" value="TPR-like_helical_dom_sf"/>
</dbReference>
<dbReference type="PANTHER" id="PTHR13768:SF23">
    <property type="entry name" value="ALPHA-SOLUBLE NSF ATTACHMENT PROTEIN"/>
    <property type="match status" value="1"/>
</dbReference>
<dbReference type="PANTHER" id="PTHR13768">
    <property type="entry name" value="SOLUBLE NSF ATTACHMENT PROTEIN SNAP"/>
    <property type="match status" value="1"/>
</dbReference>
<dbReference type="Pfam" id="PF14938">
    <property type="entry name" value="SNAP"/>
    <property type="match status" value="1"/>
</dbReference>
<dbReference type="PRINTS" id="PR00448">
    <property type="entry name" value="NSFATTACHMNT"/>
</dbReference>
<dbReference type="SUPFAM" id="SSF48452">
    <property type="entry name" value="TPR-like"/>
    <property type="match status" value="1"/>
</dbReference>
<accession>P54920</accession>
<accession>A8K879</accession>
<accession>Q96IK3</accession>
<accession>Q9BVJ3</accession>